<gene>
    <name type="ordered locus">PYRAB17160</name>
    <name type="ORF">PAB1125</name>
</gene>
<reference key="1">
    <citation type="journal article" date="2003" name="Mol. Microbiol.">
        <title>An integrated analysis of the genome of the hyperthermophilic archaeon Pyrococcus abyssi.</title>
        <authorList>
            <person name="Cohen G.N."/>
            <person name="Barbe V."/>
            <person name="Flament D."/>
            <person name="Galperin M."/>
            <person name="Heilig R."/>
            <person name="Lecompte O."/>
            <person name="Poch O."/>
            <person name="Prieur D."/>
            <person name="Querellou J."/>
            <person name="Ripp R."/>
            <person name="Thierry J.-C."/>
            <person name="Van der Oost J."/>
            <person name="Weissenbach J."/>
            <person name="Zivanovic Y."/>
            <person name="Forterre P."/>
        </authorList>
    </citation>
    <scope>NUCLEOTIDE SEQUENCE [LARGE SCALE GENOMIC DNA]</scope>
    <source>
        <strain>GE5 / Orsay</strain>
    </source>
</reference>
<reference key="2">
    <citation type="journal article" date="2012" name="Curr. Microbiol.">
        <title>Re-annotation of two hyperthermophilic archaea Pyrococcus abyssi GE5 and Pyrococcus furiosus DSM 3638.</title>
        <authorList>
            <person name="Gao J."/>
            <person name="Wang J."/>
        </authorList>
    </citation>
    <scope>GENOME REANNOTATION</scope>
    <source>
        <strain>GE5 / Orsay</strain>
    </source>
</reference>
<protein>
    <recommendedName>
        <fullName evidence="1">dTTP/UTP pyrophosphatase</fullName>
        <shortName evidence="1">dTTPase/UTPase</shortName>
        <ecNumber evidence="1">3.6.1.9</ecNumber>
    </recommendedName>
    <alternativeName>
        <fullName evidence="1">Nucleoside triphosphate pyrophosphatase</fullName>
    </alternativeName>
    <alternativeName>
        <fullName evidence="1">Nucleotide pyrophosphatase</fullName>
        <shortName evidence="1">Nucleotide PPase</shortName>
    </alternativeName>
</protein>
<organism>
    <name type="scientific">Pyrococcus abyssi (strain GE5 / Orsay)</name>
    <dbReference type="NCBI Taxonomy" id="272844"/>
    <lineage>
        <taxon>Archaea</taxon>
        <taxon>Methanobacteriati</taxon>
        <taxon>Methanobacteriota</taxon>
        <taxon>Thermococci</taxon>
        <taxon>Thermococcales</taxon>
        <taxon>Thermococcaceae</taxon>
        <taxon>Pyrococcus</taxon>
    </lineage>
</organism>
<feature type="chain" id="PRO_0000123086" description="dTTP/UTP pyrophosphatase">
    <location>
        <begin position="1"/>
        <end position="187"/>
    </location>
</feature>
<feature type="active site" description="Proton acceptor" evidence="1">
    <location>
        <position position="65"/>
    </location>
</feature>
<feature type="site" description="Important for substrate specificity" evidence="1">
    <location>
        <position position="10"/>
    </location>
</feature>
<feature type="site" description="Important for substrate specificity" evidence="1">
    <location>
        <position position="66"/>
    </location>
</feature>
<feature type="site" description="Important for substrate specificity" evidence="1">
    <location>
        <position position="148"/>
    </location>
</feature>
<name>NTPPA_PYRAB</name>
<dbReference type="EC" id="3.6.1.9" evidence="1"/>
<dbReference type="EMBL" id="AJ248288">
    <property type="protein sequence ID" value="CAB50621.1"/>
    <property type="molecule type" value="Genomic_DNA"/>
</dbReference>
<dbReference type="EMBL" id="HE613800">
    <property type="protein sequence ID" value="CCE71188.1"/>
    <property type="molecule type" value="Genomic_DNA"/>
</dbReference>
<dbReference type="PIR" id="G75022">
    <property type="entry name" value="G75022"/>
</dbReference>
<dbReference type="RefSeq" id="WP_010868834.1">
    <property type="nucleotide sequence ID" value="NC_000868.1"/>
</dbReference>
<dbReference type="SMR" id="Q9UXZ1"/>
<dbReference type="STRING" id="272844.PAB1125"/>
<dbReference type="KEGG" id="pab:PAB1125"/>
<dbReference type="PATRIC" id="fig|272844.11.peg.1833"/>
<dbReference type="eggNOG" id="arCOG05007">
    <property type="taxonomic scope" value="Archaea"/>
</dbReference>
<dbReference type="HOGENOM" id="CLU_040416_0_0_2"/>
<dbReference type="OrthoDB" id="45223at2157"/>
<dbReference type="PhylomeDB" id="Q9UXZ1"/>
<dbReference type="Proteomes" id="UP000000810">
    <property type="component" value="Chromosome"/>
</dbReference>
<dbReference type="Proteomes" id="UP000009139">
    <property type="component" value="Chromosome"/>
</dbReference>
<dbReference type="GO" id="GO:0005737">
    <property type="term" value="C:cytoplasm"/>
    <property type="evidence" value="ECO:0007669"/>
    <property type="project" value="UniProtKB-SubCell"/>
</dbReference>
<dbReference type="GO" id="GO:0036218">
    <property type="term" value="F:dTTP diphosphatase activity"/>
    <property type="evidence" value="ECO:0007669"/>
    <property type="project" value="RHEA"/>
</dbReference>
<dbReference type="GO" id="GO:0036221">
    <property type="term" value="F:UTP diphosphatase activity"/>
    <property type="evidence" value="ECO:0007669"/>
    <property type="project" value="RHEA"/>
</dbReference>
<dbReference type="GO" id="GO:0009117">
    <property type="term" value="P:nucleotide metabolic process"/>
    <property type="evidence" value="ECO:0007669"/>
    <property type="project" value="UniProtKB-KW"/>
</dbReference>
<dbReference type="CDD" id="cd00555">
    <property type="entry name" value="Maf"/>
    <property type="match status" value="1"/>
</dbReference>
<dbReference type="Gene3D" id="3.90.950.10">
    <property type="match status" value="1"/>
</dbReference>
<dbReference type="HAMAP" id="MF_00528">
    <property type="entry name" value="Maf"/>
    <property type="match status" value="1"/>
</dbReference>
<dbReference type="InterPro" id="IPR029001">
    <property type="entry name" value="ITPase-like_fam"/>
</dbReference>
<dbReference type="InterPro" id="IPR003697">
    <property type="entry name" value="Maf-like"/>
</dbReference>
<dbReference type="NCBIfam" id="TIGR00172">
    <property type="entry name" value="maf"/>
    <property type="match status" value="1"/>
</dbReference>
<dbReference type="PANTHER" id="PTHR43213">
    <property type="entry name" value="BIFUNCTIONAL DTTP/UTP PYROPHOSPHATASE/METHYLTRANSFERASE PROTEIN-RELATED"/>
    <property type="match status" value="1"/>
</dbReference>
<dbReference type="PANTHER" id="PTHR43213:SF5">
    <property type="entry name" value="BIFUNCTIONAL DTTP_UTP PYROPHOSPHATASE_METHYLTRANSFERASE PROTEIN-RELATED"/>
    <property type="match status" value="1"/>
</dbReference>
<dbReference type="Pfam" id="PF02545">
    <property type="entry name" value="Maf"/>
    <property type="match status" value="1"/>
</dbReference>
<dbReference type="PIRSF" id="PIRSF006305">
    <property type="entry name" value="Maf"/>
    <property type="match status" value="1"/>
</dbReference>
<dbReference type="SUPFAM" id="SSF52972">
    <property type="entry name" value="ITPase-like"/>
    <property type="match status" value="1"/>
</dbReference>
<evidence type="ECO:0000255" key="1">
    <source>
        <dbReference type="HAMAP-Rule" id="MF_00528"/>
    </source>
</evidence>
<comment type="function">
    <text evidence="1">Nucleoside triphosphate pyrophosphatase that hydrolyzes dTTP and UTP. May have a dual role in cell division arrest and in preventing the incorporation of modified nucleotides into cellular nucleic acids.</text>
</comment>
<comment type="catalytic activity">
    <reaction evidence="1">
        <text>dTTP + H2O = dTMP + diphosphate + H(+)</text>
        <dbReference type="Rhea" id="RHEA:28534"/>
        <dbReference type="ChEBI" id="CHEBI:15377"/>
        <dbReference type="ChEBI" id="CHEBI:15378"/>
        <dbReference type="ChEBI" id="CHEBI:33019"/>
        <dbReference type="ChEBI" id="CHEBI:37568"/>
        <dbReference type="ChEBI" id="CHEBI:63528"/>
        <dbReference type="EC" id="3.6.1.9"/>
    </reaction>
</comment>
<comment type="catalytic activity">
    <reaction evidence="1">
        <text>UTP + H2O = UMP + diphosphate + H(+)</text>
        <dbReference type="Rhea" id="RHEA:29395"/>
        <dbReference type="ChEBI" id="CHEBI:15377"/>
        <dbReference type="ChEBI" id="CHEBI:15378"/>
        <dbReference type="ChEBI" id="CHEBI:33019"/>
        <dbReference type="ChEBI" id="CHEBI:46398"/>
        <dbReference type="ChEBI" id="CHEBI:57865"/>
        <dbReference type="EC" id="3.6.1.9"/>
    </reaction>
</comment>
<comment type="cofactor">
    <cofactor evidence="1">
        <name>a divalent metal cation</name>
        <dbReference type="ChEBI" id="CHEBI:60240"/>
    </cofactor>
</comment>
<comment type="subcellular location">
    <subcellularLocation>
        <location evidence="1">Cytoplasm</location>
    </subcellularLocation>
</comment>
<comment type="similarity">
    <text evidence="1">Belongs to the Maf family. YhdE subfamily.</text>
</comment>
<proteinExistence type="inferred from homology"/>
<keyword id="KW-0963">Cytoplasm</keyword>
<keyword id="KW-0378">Hydrolase</keyword>
<keyword id="KW-0546">Nucleotide metabolism</keyword>
<accession>Q9UXZ1</accession>
<accession>G8ZK81</accession>
<sequence>MIILASSSPRRREILGKFFDIKVYPSEIDERSNARSPKERALDLARKKALAVHSRFPNDTIVAADTIVVLDGEVLGKPKSEREARVMLEKLSGKVHSVITGYCIIHNGKVVGGVEETKVKFRNLSEDLIEWYLSTEEWKDKAGSYGIQGYASIFVEWIQGDYYNVVGLPIKVVVELIKLGFKPRPKR</sequence>